<dbReference type="EMBL" id="Y11867">
    <property type="protein sequence ID" value="CAA72615.1"/>
    <property type="molecule type" value="mRNA"/>
</dbReference>
<dbReference type="SMR" id="P79399"/>
<dbReference type="FunCoup" id="P79399">
    <property type="interactions" value="2"/>
</dbReference>
<dbReference type="STRING" id="9823.ENSSSCP00000063582"/>
<dbReference type="BindingDB" id="P79399"/>
<dbReference type="ChEMBL" id="CHEMBL4104"/>
<dbReference type="PaxDb" id="9823-ENSSSCP00000004826"/>
<dbReference type="eggNOG" id="KOG3656">
    <property type="taxonomic scope" value="Eukaryota"/>
</dbReference>
<dbReference type="HOGENOM" id="CLU_009579_11_1_1"/>
<dbReference type="InParanoid" id="P79399"/>
<dbReference type="Proteomes" id="UP000008227">
    <property type="component" value="Unplaced"/>
</dbReference>
<dbReference type="Proteomes" id="UP000314985">
    <property type="component" value="Unplaced"/>
</dbReference>
<dbReference type="Proteomes" id="UP000694570">
    <property type="component" value="Unplaced"/>
</dbReference>
<dbReference type="Proteomes" id="UP000694571">
    <property type="component" value="Unplaced"/>
</dbReference>
<dbReference type="Proteomes" id="UP000694720">
    <property type="component" value="Unplaced"/>
</dbReference>
<dbReference type="Proteomes" id="UP000694722">
    <property type="component" value="Unplaced"/>
</dbReference>
<dbReference type="Proteomes" id="UP000694723">
    <property type="component" value="Unplaced"/>
</dbReference>
<dbReference type="Proteomes" id="UP000694724">
    <property type="component" value="Unplaced"/>
</dbReference>
<dbReference type="Proteomes" id="UP000694725">
    <property type="component" value="Unplaced"/>
</dbReference>
<dbReference type="Proteomes" id="UP000694726">
    <property type="component" value="Unplaced"/>
</dbReference>
<dbReference type="Proteomes" id="UP000694727">
    <property type="component" value="Unplaced"/>
</dbReference>
<dbReference type="Proteomes" id="UP000694728">
    <property type="component" value="Unplaced"/>
</dbReference>
<dbReference type="GO" id="GO:0005886">
    <property type="term" value="C:plasma membrane"/>
    <property type="evidence" value="ECO:0000250"/>
    <property type="project" value="UniProtKB"/>
</dbReference>
<dbReference type="GO" id="GO:0045202">
    <property type="term" value="C:synapse"/>
    <property type="evidence" value="ECO:0007669"/>
    <property type="project" value="GOC"/>
</dbReference>
<dbReference type="GO" id="GO:0004993">
    <property type="term" value="F:G protein-coupled serotonin receptor activity"/>
    <property type="evidence" value="ECO:0000250"/>
    <property type="project" value="UniProtKB"/>
</dbReference>
<dbReference type="GO" id="GO:0007198">
    <property type="term" value="P:adenylate cyclase-inhibiting serotonin receptor signaling pathway"/>
    <property type="evidence" value="ECO:0000250"/>
    <property type="project" value="UniProtKB"/>
</dbReference>
<dbReference type="GO" id="GO:0046849">
    <property type="term" value="P:bone remodeling"/>
    <property type="evidence" value="ECO:0007669"/>
    <property type="project" value="InterPro"/>
</dbReference>
<dbReference type="GO" id="GO:0071312">
    <property type="term" value="P:cellular response to alkaloid"/>
    <property type="evidence" value="ECO:0000250"/>
    <property type="project" value="UniProtKB"/>
</dbReference>
<dbReference type="GO" id="GO:0071466">
    <property type="term" value="P:cellular response to xenobiotic stimulus"/>
    <property type="evidence" value="ECO:0000250"/>
    <property type="project" value="UniProtKB"/>
</dbReference>
<dbReference type="GO" id="GO:0007268">
    <property type="term" value="P:chemical synaptic transmission"/>
    <property type="evidence" value="ECO:0007669"/>
    <property type="project" value="InterPro"/>
</dbReference>
<dbReference type="GO" id="GO:0014063">
    <property type="term" value="P:negative regulation of serotonin secretion"/>
    <property type="evidence" value="ECO:0000250"/>
    <property type="project" value="UniProtKB"/>
</dbReference>
<dbReference type="GO" id="GO:0050795">
    <property type="term" value="P:regulation of behavior"/>
    <property type="evidence" value="ECO:0007669"/>
    <property type="project" value="InterPro"/>
</dbReference>
<dbReference type="GO" id="GO:0042310">
    <property type="term" value="P:vasoconstriction"/>
    <property type="evidence" value="ECO:0007669"/>
    <property type="project" value="InterPro"/>
</dbReference>
<dbReference type="FunFam" id="1.20.1070.10:FF:000248">
    <property type="entry name" value="5-hydroxytryptamine receptor 1A-beta"/>
    <property type="match status" value="1"/>
</dbReference>
<dbReference type="Gene3D" id="1.20.1070.10">
    <property type="entry name" value="Rhodopsin 7-helix transmembrane proteins"/>
    <property type="match status" value="1"/>
</dbReference>
<dbReference type="InterPro" id="IPR002147">
    <property type="entry name" value="5HT1B_rcpt"/>
</dbReference>
<dbReference type="InterPro" id="IPR000276">
    <property type="entry name" value="GPCR_Rhodpsn"/>
</dbReference>
<dbReference type="InterPro" id="IPR017452">
    <property type="entry name" value="GPCR_Rhodpsn_7TM"/>
</dbReference>
<dbReference type="PANTHER" id="PTHR24248:SF201">
    <property type="entry name" value="5-HYDROXYTRYPTAMINE RECEPTOR 1B"/>
    <property type="match status" value="1"/>
</dbReference>
<dbReference type="PANTHER" id="PTHR24248">
    <property type="entry name" value="ADRENERGIC RECEPTOR-RELATED G-PROTEIN COUPLED RECEPTOR"/>
    <property type="match status" value="1"/>
</dbReference>
<dbReference type="Pfam" id="PF00001">
    <property type="entry name" value="7tm_1"/>
    <property type="match status" value="1"/>
</dbReference>
<dbReference type="PRINTS" id="PR00513">
    <property type="entry name" value="5HT1BRECEPTR"/>
</dbReference>
<dbReference type="PRINTS" id="PR00237">
    <property type="entry name" value="GPCRRHODOPSN"/>
</dbReference>
<dbReference type="SUPFAM" id="SSF81321">
    <property type="entry name" value="Family A G protein-coupled receptor-like"/>
    <property type="match status" value="1"/>
</dbReference>
<dbReference type="PROSITE" id="PS50262">
    <property type="entry name" value="G_PROTEIN_RECEP_F1_2"/>
    <property type="match status" value="1"/>
</dbReference>
<accession>P79399</accession>
<feature type="chain" id="PRO_0000068919" description="5-hydroxytryptamine receptor 1B">
    <location>
        <begin position="1" status="less than"/>
        <end position="150" status="greater than"/>
    </location>
</feature>
<feature type="topological domain" description="Extracellular" evidence="1">
    <location>
        <begin position="1" status="less than"/>
        <end position="83"/>
    </location>
</feature>
<feature type="transmembrane region" description="Helical; Name=6" evidence="1">
    <location>
        <begin position="84"/>
        <end position="105"/>
    </location>
</feature>
<feature type="topological domain" description="Cytoplasmic" evidence="1">
    <location>
        <begin position="106"/>
        <end position="115"/>
    </location>
</feature>
<feature type="transmembrane region" description="Helical; Name=7" evidence="1">
    <location>
        <begin position="116"/>
        <end position="138"/>
    </location>
</feature>
<feature type="topological domain" description="Extracellular" evidence="1">
    <location>
        <begin position="139"/>
        <end position="150" status="greater than"/>
    </location>
</feature>
<feature type="region of interest" description="Disordered" evidence="4">
    <location>
        <begin position="27"/>
        <end position="50"/>
    </location>
</feature>
<feature type="short sequence motif" description="NPxxY motif; important for ligand-induced conformation changes and signaling" evidence="2">
    <location>
        <begin position="133"/>
        <end position="137"/>
    </location>
</feature>
<feature type="compositionally biased region" description="Polar residues" evidence="4">
    <location>
        <begin position="27"/>
        <end position="40"/>
    </location>
</feature>
<feature type="site" description="Important for species-specific agonist sensitivity" evidence="1">
    <location>
        <position position="123"/>
    </location>
</feature>
<feature type="non-terminal residue">
    <location>
        <position position="1"/>
    </location>
</feature>
<feature type="non-terminal residue">
    <location>
        <position position="150"/>
    </location>
</feature>
<gene>
    <name type="primary">HTR1B</name>
</gene>
<keyword id="KW-0085">Behavior</keyword>
<keyword id="KW-1003">Cell membrane</keyword>
<keyword id="KW-0297">G-protein coupled receptor</keyword>
<keyword id="KW-0449">Lipoprotein</keyword>
<keyword id="KW-0472">Membrane</keyword>
<keyword id="KW-0564">Palmitate</keyword>
<keyword id="KW-0597">Phosphoprotein</keyword>
<keyword id="KW-0675">Receptor</keyword>
<keyword id="KW-1185">Reference proteome</keyword>
<keyword id="KW-0807">Transducer</keyword>
<keyword id="KW-0812">Transmembrane</keyword>
<keyword id="KW-1133">Transmembrane helix</keyword>
<evidence type="ECO:0000250" key="1">
    <source>
        <dbReference type="UniProtKB" id="P28222"/>
    </source>
</evidence>
<evidence type="ECO:0000250" key="2">
    <source>
        <dbReference type="UniProtKB" id="P41595"/>
    </source>
</evidence>
<evidence type="ECO:0000255" key="3">
    <source>
        <dbReference type="PROSITE-ProRule" id="PRU00521"/>
    </source>
</evidence>
<evidence type="ECO:0000256" key="4">
    <source>
        <dbReference type="SAM" id="MobiDB-lite"/>
    </source>
</evidence>
<name>5HT1B_PIG</name>
<protein>
    <recommendedName>
        <fullName>5-hydroxytryptamine receptor 1B</fullName>
        <shortName>5-HT-1B</shortName>
        <shortName>5-HT1B</shortName>
    </recommendedName>
    <alternativeName>
        <fullName>Serotonin receptor 1B</fullName>
    </alternativeName>
</protein>
<comment type="function">
    <text evidence="1">G-protein coupled receptor for 5-hydroxytryptamine (serotonin). Also functions as a receptor for ergot alkaloid derivatives, various anxiolytic and antidepressant drugs and other psychoactive substances, such as lysergic acid diethylamide (LSD). Ligand binding causes a conformation change that triggers signaling via guanine nucleotide-binding proteins (G proteins) and modulates the activity of downstream effectors, such as adenylate cyclase. HTR1B is coupled to G(i)/G(o) G alpha proteins and mediates inhibitory neurotransmission by inhibiting adenylate cyclase activity. Arrestin family members inhibit signaling via G proteins and mediate activation of alternative signaling pathways. Regulates the release of 5-hydroxytryptamine, dopamine and acetylcholine in the brain, and thereby affects neural activity, nociceptive processing, pain perception, mood and behavior. Besides, plays a role in vasoconstriction of cerebral arteries.</text>
</comment>
<comment type="subunit">
    <text evidence="1">Homodimer. Heterodimer with HTR1D.</text>
</comment>
<comment type="subcellular location">
    <subcellularLocation>
        <location evidence="1">Cell membrane</location>
        <topology evidence="1">Multi-pass membrane protein</topology>
    </subcellularLocation>
</comment>
<comment type="domain">
    <text evidence="1">Ligands are bound in a hydrophobic pocket formed by the transmembrane helices.</text>
</comment>
<comment type="domain">
    <text evidence="1">A residue in the 7th transmembrane region ('Thr-355' in human, 'Asn-351' in mouse and rat) is important for species-specific sensitivity to various agonists.</text>
</comment>
<comment type="PTM">
    <text evidence="1">Phosphorylated. Desensitization of the receptor may be mediated by its phosphorylation.</text>
</comment>
<comment type="PTM">
    <text evidence="1">Palmitoylated.</text>
</comment>
<comment type="similarity">
    <text evidence="3">Belongs to the G-protein coupled receptor 1 family.</text>
</comment>
<organism>
    <name type="scientific">Sus scrofa</name>
    <name type="common">Pig</name>
    <dbReference type="NCBI Taxonomy" id="9823"/>
    <lineage>
        <taxon>Eukaryota</taxon>
        <taxon>Metazoa</taxon>
        <taxon>Chordata</taxon>
        <taxon>Craniata</taxon>
        <taxon>Vertebrata</taxon>
        <taxon>Euteleostomi</taxon>
        <taxon>Mammalia</taxon>
        <taxon>Eutheria</taxon>
        <taxon>Laurasiatheria</taxon>
        <taxon>Artiodactyla</taxon>
        <taxon>Suina</taxon>
        <taxon>Suidae</taxon>
        <taxon>Sus</taxon>
    </lineage>
</organism>
<proteinExistence type="evidence at transcript level"/>
<reference key="1">
    <citation type="submission" date="1997-03" db="EMBL/GenBank/DDBJ databases">
        <authorList>
            <person name="Wurch T."/>
            <person name="Lestienne F."/>
            <person name="Colpaert F.C."/>
            <person name="Pauwels P.J."/>
        </authorList>
    </citation>
    <scope>NUCLEOTIDE SEQUENCE [MRNA]</scope>
    <source>
        <tissue>Brain cortex</tissue>
    </source>
</reference>
<sequence length="150" mass="16941">VEARSRILKQTPNRTGKRLTRAQLITDSPGSTSSVTSINSRAPDLPSESGSPVYVNQVKVRVSDALLEKKKLMAARERKATKTLGIILGAFIVCWLPFFIISLAMPICKDACWFHLAIFDFFTWLGYLNSLINPIIYTMFNEDFKQAFHK</sequence>